<gene>
    <name type="primary">ydiZ</name>
    <name type="ordered locus">Z2753</name>
    <name type="ordered locus">ECs2430</name>
</gene>
<reference key="1">
    <citation type="journal article" date="2001" name="Nature">
        <title>Genome sequence of enterohaemorrhagic Escherichia coli O157:H7.</title>
        <authorList>
            <person name="Perna N.T."/>
            <person name="Plunkett G. III"/>
            <person name="Burland V."/>
            <person name="Mau B."/>
            <person name="Glasner J.D."/>
            <person name="Rose D.J."/>
            <person name="Mayhew G.F."/>
            <person name="Evans P.S."/>
            <person name="Gregor J."/>
            <person name="Kirkpatrick H.A."/>
            <person name="Posfai G."/>
            <person name="Hackett J."/>
            <person name="Klink S."/>
            <person name="Boutin A."/>
            <person name="Shao Y."/>
            <person name="Miller L."/>
            <person name="Grotbeck E.J."/>
            <person name="Davis N.W."/>
            <person name="Lim A."/>
            <person name="Dimalanta E.T."/>
            <person name="Potamousis K."/>
            <person name="Apodaca J."/>
            <person name="Anantharaman T.S."/>
            <person name="Lin J."/>
            <person name="Yen G."/>
            <person name="Schwartz D.C."/>
            <person name="Welch R.A."/>
            <person name="Blattner F.R."/>
        </authorList>
    </citation>
    <scope>NUCLEOTIDE SEQUENCE [LARGE SCALE GENOMIC DNA]</scope>
    <source>
        <strain>O157:H7 / EDL933 / ATCC 700927 / EHEC</strain>
    </source>
</reference>
<reference key="2">
    <citation type="journal article" date="2001" name="DNA Res.">
        <title>Complete genome sequence of enterohemorrhagic Escherichia coli O157:H7 and genomic comparison with a laboratory strain K-12.</title>
        <authorList>
            <person name="Hayashi T."/>
            <person name="Makino K."/>
            <person name="Ohnishi M."/>
            <person name="Kurokawa K."/>
            <person name="Ishii K."/>
            <person name="Yokoyama K."/>
            <person name="Han C.-G."/>
            <person name="Ohtsubo E."/>
            <person name="Nakayama K."/>
            <person name="Murata T."/>
            <person name="Tanaka M."/>
            <person name="Tobe T."/>
            <person name="Iida T."/>
            <person name="Takami H."/>
            <person name="Honda T."/>
            <person name="Sasakawa C."/>
            <person name="Ogasawara N."/>
            <person name="Yasunaga T."/>
            <person name="Kuhara S."/>
            <person name="Shiba T."/>
            <person name="Hattori M."/>
            <person name="Shinagawa H."/>
        </authorList>
    </citation>
    <scope>NUCLEOTIDE SEQUENCE [LARGE SCALE GENOMIC DNA]</scope>
    <source>
        <strain>O157:H7 / Sakai / RIMD 0509952 / EHEC</strain>
    </source>
</reference>
<accession>P64480</accession>
<accession>P76207</accession>
<feature type="chain" id="PRO_0000168999" description="Uncharacterized protein YdiZ">
    <location>
        <begin position="1"/>
        <end position="96"/>
    </location>
</feature>
<sequence length="96" mass="10865">MASGDLVRYVITVMLHEDTLTEINELNNYLTRDGFLLTMTDDEGNIHELGTNTFGLISTQSEEEIRELVSGLTQSATGKDPEITITTWEEWNSNRK</sequence>
<dbReference type="EMBL" id="AE005174">
    <property type="protein sequence ID" value="AAG56710.1"/>
    <property type="molecule type" value="Genomic_DNA"/>
</dbReference>
<dbReference type="EMBL" id="BA000007">
    <property type="protein sequence ID" value="BAB35853.1"/>
    <property type="molecule type" value="Genomic_DNA"/>
</dbReference>
<dbReference type="PIR" id="F90932">
    <property type="entry name" value="F90932"/>
</dbReference>
<dbReference type="RefSeq" id="NP_310457.1">
    <property type="nucleotide sequence ID" value="NC_002695.1"/>
</dbReference>
<dbReference type="SMR" id="P64480"/>
<dbReference type="STRING" id="155864.Z2753"/>
<dbReference type="GeneID" id="916913"/>
<dbReference type="KEGG" id="ece:Z2753"/>
<dbReference type="KEGG" id="ecs:ECs_2430"/>
<dbReference type="PATRIC" id="fig|386585.9.peg.2544"/>
<dbReference type="eggNOG" id="ENOG5032T3T">
    <property type="taxonomic scope" value="Bacteria"/>
</dbReference>
<dbReference type="HOGENOM" id="CLU_166689_0_0_6"/>
<dbReference type="OMA" id="FRYQEEG"/>
<dbReference type="Proteomes" id="UP000000558">
    <property type="component" value="Chromosome"/>
</dbReference>
<dbReference type="Proteomes" id="UP000002519">
    <property type="component" value="Chromosome"/>
</dbReference>
<dbReference type="GO" id="GO:0004521">
    <property type="term" value="F:RNA endonuclease activity"/>
    <property type="evidence" value="ECO:0007669"/>
    <property type="project" value="InterPro"/>
</dbReference>
<dbReference type="FunFam" id="3.30.70.2360:FF:000001">
    <property type="entry name" value="Endoribonuclease GhoS"/>
    <property type="match status" value="1"/>
</dbReference>
<dbReference type="Gene3D" id="3.30.70.2360">
    <property type="match status" value="1"/>
</dbReference>
<dbReference type="InterPro" id="IPR022597">
    <property type="entry name" value="GhoS"/>
</dbReference>
<dbReference type="InterPro" id="IPR038241">
    <property type="entry name" value="GhoS_sf"/>
</dbReference>
<dbReference type="Pfam" id="PF11080">
    <property type="entry name" value="GhoS"/>
    <property type="match status" value="1"/>
</dbReference>
<keyword id="KW-1185">Reference proteome</keyword>
<organism>
    <name type="scientific">Escherichia coli O157:H7</name>
    <dbReference type="NCBI Taxonomy" id="83334"/>
    <lineage>
        <taxon>Bacteria</taxon>
        <taxon>Pseudomonadati</taxon>
        <taxon>Pseudomonadota</taxon>
        <taxon>Gammaproteobacteria</taxon>
        <taxon>Enterobacterales</taxon>
        <taxon>Enterobacteriaceae</taxon>
        <taxon>Escherichia</taxon>
    </lineage>
</organism>
<name>YDIZ_ECO57</name>
<proteinExistence type="predicted"/>
<protein>
    <recommendedName>
        <fullName>Uncharacterized protein YdiZ</fullName>
    </recommendedName>
</protein>